<sequence>MSPTTAANQAKKLIKVPEMRRIKHIHFVGIGGAGMCGIAEVLANQGYKISGSDIKASKTTQQLEENGIKVYIGHEAENIKNANVLVVSTAIDPENPEVKAAIEQRIPIVRRAEMLGELMRYRHGIAVAGTHGKTTTTSLLTTMLAEENLDPTYVIGGLLNSTGVNAALGESRFIVAEADESDASFLYLQPMAAIVTNIDADHMDTYEGSFDKLKDTFVQFLHNLPFYGLAVVCGDDANIREILPRVGRPVITYGFNEDNDIRAIDVEQDGMRSHFTVLRKGREPLRLTINQPGLHNVLNALAAIGVATDEGVSDEAISRALKGFSGVGRRFQVQGEFELGEGNVKLVDDYGHHPKEVEATIKAARQSHPDRRLVMLFQPHRYSRTRDCFDDFIEVLSQVDQLLLLEVYPAGEKPIVGADSRTLARSIRLRGQVEPILIDPVEGNLQNIMQNVLQPNDLLLTQGAGNVGAISVELAQHHLYVK</sequence>
<gene>
    <name evidence="1" type="primary">murC</name>
    <name type="ordered locus">A1S_3335</name>
</gene>
<organism>
    <name type="scientific">Acinetobacter baumannii (strain ATCC 17978 / DSM 105126 / CIP 53.77 / LMG 1025 / NCDC KC755 / 5377)</name>
    <dbReference type="NCBI Taxonomy" id="400667"/>
    <lineage>
        <taxon>Bacteria</taxon>
        <taxon>Pseudomonadati</taxon>
        <taxon>Pseudomonadota</taxon>
        <taxon>Gammaproteobacteria</taxon>
        <taxon>Moraxellales</taxon>
        <taxon>Moraxellaceae</taxon>
        <taxon>Acinetobacter</taxon>
        <taxon>Acinetobacter calcoaceticus/baumannii complex</taxon>
    </lineage>
</organism>
<accession>A3M9Y0</accession>
<name>MURC_ACIBT</name>
<protein>
    <recommendedName>
        <fullName evidence="1">UDP-N-acetylmuramate--L-alanine ligase</fullName>
        <ecNumber evidence="1">6.3.2.8</ecNumber>
    </recommendedName>
    <alternativeName>
        <fullName evidence="1">UDP-N-acetylmuramoyl-L-alanine synthetase</fullName>
    </alternativeName>
</protein>
<proteinExistence type="inferred from homology"/>
<dbReference type="EC" id="6.3.2.8" evidence="1"/>
<dbReference type="EMBL" id="CP000521">
    <property type="protein sequence ID" value="ABO13724.2"/>
    <property type="molecule type" value="Genomic_DNA"/>
</dbReference>
<dbReference type="RefSeq" id="WP_000075472.1">
    <property type="nucleotide sequence ID" value="NZ_CP053098.1"/>
</dbReference>
<dbReference type="SMR" id="A3M9Y0"/>
<dbReference type="KEGG" id="acb:A1S_3335"/>
<dbReference type="HOGENOM" id="CLU_028104_2_2_6"/>
<dbReference type="UniPathway" id="UPA00219"/>
<dbReference type="GO" id="GO:0005737">
    <property type="term" value="C:cytoplasm"/>
    <property type="evidence" value="ECO:0007669"/>
    <property type="project" value="UniProtKB-SubCell"/>
</dbReference>
<dbReference type="GO" id="GO:0005524">
    <property type="term" value="F:ATP binding"/>
    <property type="evidence" value="ECO:0007669"/>
    <property type="project" value="UniProtKB-UniRule"/>
</dbReference>
<dbReference type="GO" id="GO:0008763">
    <property type="term" value="F:UDP-N-acetylmuramate-L-alanine ligase activity"/>
    <property type="evidence" value="ECO:0007669"/>
    <property type="project" value="UniProtKB-UniRule"/>
</dbReference>
<dbReference type="GO" id="GO:0051301">
    <property type="term" value="P:cell division"/>
    <property type="evidence" value="ECO:0007669"/>
    <property type="project" value="UniProtKB-KW"/>
</dbReference>
<dbReference type="GO" id="GO:0071555">
    <property type="term" value="P:cell wall organization"/>
    <property type="evidence" value="ECO:0007669"/>
    <property type="project" value="UniProtKB-KW"/>
</dbReference>
<dbReference type="GO" id="GO:0009252">
    <property type="term" value="P:peptidoglycan biosynthetic process"/>
    <property type="evidence" value="ECO:0007669"/>
    <property type="project" value="UniProtKB-UniRule"/>
</dbReference>
<dbReference type="GO" id="GO:0008360">
    <property type="term" value="P:regulation of cell shape"/>
    <property type="evidence" value="ECO:0007669"/>
    <property type="project" value="UniProtKB-KW"/>
</dbReference>
<dbReference type="FunFam" id="3.40.1190.10:FF:000001">
    <property type="entry name" value="UDP-N-acetylmuramate--L-alanine ligase"/>
    <property type="match status" value="1"/>
</dbReference>
<dbReference type="FunFam" id="3.40.50.720:FF:000046">
    <property type="entry name" value="UDP-N-acetylmuramate--L-alanine ligase"/>
    <property type="match status" value="1"/>
</dbReference>
<dbReference type="Gene3D" id="3.90.190.20">
    <property type="entry name" value="Mur ligase, C-terminal domain"/>
    <property type="match status" value="1"/>
</dbReference>
<dbReference type="Gene3D" id="3.40.1190.10">
    <property type="entry name" value="Mur-like, catalytic domain"/>
    <property type="match status" value="1"/>
</dbReference>
<dbReference type="Gene3D" id="3.40.50.720">
    <property type="entry name" value="NAD(P)-binding Rossmann-like Domain"/>
    <property type="match status" value="1"/>
</dbReference>
<dbReference type="HAMAP" id="MF_00046">
    <property type="entry name" value="MurC"/>
    <property type="match status" value="1"/>
</dbReference>
<dbReference type="InterPro" id="IPR036565">
    <property type="entry name" value="Mur-like_cat_sf"/>
</dbReference>
<dbReference type="InterPro" id="IPR004101">
    <property type="entry name" value="Mur_ligase_C"/>
</dbReference>
<dbReference type="InterPro" id="IPR036615">
    <property type="entry name" value="Mur_ligase_C_dom_sf"/>
</dbReference>
<dbReference type="InterPro" id="IPR013221">
    <property type="entry name" value="Mur_ligase_cen"/>
</dbReference>
<dbReference type="InterPro" id="IPR000713">
    <property type="entry name" value="Mur_ligase_N"/>
</dbReference>
<dbReference type="InterPro" id="IPR050061">
    <property type="entry name" value="MurCDEF_pg_biosynth"/>
</dbReference>
<dbReference type="InterPro" id="IPR005758">
    <property type="entry name" value="UDP-N-AcMur_Ala_ligase_MurC"/>
</dbReference>
<dbReference type="NCBIfam" id="TIGR01082">
    <property type="entry name" value="murC"/>
    <property type="match status" value="1"/>
</dbReference>
<dbReference type="PANTHER" id="PTHR43445:SF3">
    <property type="entry name" value="UDP-N-ACETYLMURAMATE--L-ALANINE LIGASE"/>
    <property type="match status" value="1"/>
</dbReference>
<dbReference type="PANTHER" id="PTHR43445">
    <property type="entry name" value="UDP-N-ACETYLMURAMATE--L-ALANINE LIGASE-RELATED"/>
    <property type="match status" value="1"/>
</dbReference>
<dbReference type="Pfam" id="PF01225">
    <property type="entry name" value="Mur_ligase"/>
    <property type="match status" value="1"/>
</dbReference>
<dbReference type="Pfam" id="PF02875">
    <property type="entry name" value="Mur_ligase_C"/>
    <property type="match status" value="1"/>
</dbReference>
<dbReference type="Pfam" id="PF08245">
    <property type="entry name" value="Mur_ligase_M"/>
    <property type="match status" value="1"/>
</dbReference>
<dbReference type="SUPFAM" id="SSF51984">
    <property type="entry name" value="MurCD N-terminal domain"/>
    <property type="match status" value="1"/>
</dbReference>
<dbReference type="SUPFAM" id="SSF53623">
    <property type="entry name" value="MurD-like peptide ligases, catalytic domain"/>
    <property type="match status" value="1"/>
</dbReference>
<dbReference type="SUPFAM" id="SSF53244">
    <property type="entry name" value="MurD-like peptide ligases, peptide-binding domain"/>
    <property type="match status" value="1"/>
</dbReference>
<feature type="chain" id="PRO_0000336808" description="UDP-N-acetylmuramate--L-alanine ligase">
    <location>
        <begin position="1"/>
        <end position="482"/>
    </location>
</feature>
<feature type="binding site" evidence="1">
    <location>
        <begin position="129"/>
        <end position="135"/>
    </location>
    <ligand>
        <name>ATP</name>
        <dbReference type="ChEBI" id="CHEBI:30616"/>
    </ligand>
</feature>
<evidence type="ECO:0000255" key="1">
    <source>
        <dbReference type="HAMAP-Rule" id="MF_00046"/>
    </source>
</evidence>
<reference key="1">
    <citation type="journal article" date="2007" name="Genes Dev.">
        <title>New insights into Acinetobacter baumannii pathogenesis revealed by high-density pyrosequencing and transposon mutagenesis.</title>
        <authorList>
            <person name="Smith M.G."/>
            <person name="Gianoulis T.A."/>
            <person name="Pukatzki S."/>
            <person name="Mekalanos J.J."/>
            <person name="Ornston L.N."/>
            <person name="Gerstein M."/>
            <person name="Snyder M."/>
        </authorList>
    </citation>
    <scope>NUCLEOTIDE SEQUENCE [LARGE SCALE GENOMIC DNA]</scope>
    <source>
        <strain>ATCC 17978 / DSM 105126 / CIP 53.77 / LMG 1025 / NCDC KC755 / 5377</strain>
    </source>
</reference>
<keyword id="KW-0067">ATP-binding</keyword>
<keyword id="KW-0131">Cell cycle</keyword>
<keyword id="KW-0132">Cell division</keyword>
<keyword id="KW-0133">Cell shape</keyword>
<keyword id="KW-0961">Cell wall biogenesis/degradation</keyword>
<keyword id="KW-0963">Cytoplasm</keyword>
<keyword id="KW-0436">Ligase</keyword>
<keyword id="KW-0547">Nucleotide-binding</keyword>
<keyword id="KW-0573">Peptidoglycan synthesis</keyword>
<comment type="function">
    <text evidence="1">Cell wall formation.</text>
</comment>
<comment type="catalytic activity">
    <reaction evidence="1">
        <text>UDP-N-acetyl-alpha-D-muramate + L-alanine + ATP = UDP-N-acetyl-alpha-D-muramoyl-L-alanine + ADP + phosphate + H(+)</text>
        <dbReference type="Rhea" id="RHEA:23372"/>
        <dbReference type="ChEBI" id="CHEBI:15378"/>
        <dbReference type="ChEBI" id="CHEBI:30616"/>
        <dbReference type="ChEBI" id="CHEBI:43474"/>
        <dbReference type="ChEBI" id="CHEBI:57972"/>
        <dbReference type="ChEBI" id="CHEBI:70757"/>
        <dbReference type="ChEBI" id="CHEBI:83898"/>
        <dbReference type="ChEBI" id="CHEBI:456216"/>
        <dbReference type="EC" id="6.3.2.8"/>
    </reaction>
</comment>
<comment type="pathway">
    <text evidence="1">Cell wall biogenesis; peptidoglycan biosynthesis.</text>
</comment>
<comment type="subcellular location">
    <subcellularLocation>
        <location evidence="1">Cytoplasm</location>
    </subcellularLocation>
</comment>
<comment type="similarity">
    <text evidence="1">Belongs to the MurCDEF family.</text>
</comment>